<keyword id="KW-0963">Cytoplasm</keyword>
<keyword id="KW-0441">Lipid A biosynthesis</keyword>
<keyword id="KW-0444">Lipid biosynthesis</keyword>
<keyword id="KW-0443">Lipid metabolism</keyword>
<keyword id="KW-0456">Lyase</keyword>
<keyword id="KW-1185">Reference proteome</keyword>
<feature type="chain" id="PRO_0000230848" description="3-hydroxyacyl-[acyl-carrier-protein] dehydratase FabZ">
    <location>
        <begin position="1"/>
        <end position="146"/>
    </location>
</feature>
<feature type="active site" evidence="1">
    <location>
        <position position="49"/>
    </location>
</feature>
<comment type="function">
    <text evidence="1">Involved in unsaturated fatty acids biosynthesis. Catalyzes the dehydration of short chain beta-hydroxyacyl-ACPs and long chain saturated and unsaturated beta-hydroxyacyl-ACPs.</text>
</comment>
<comment type="catalytic activity">
    <reaction evidence="1">
        <text>a (3R)-hydroxyacyl-[ACP] = a (2E)-enoyl-[ACP] + H2O</text>
        <dbReference type="Rhea" id="RHEA:13097"/>
        <dbReference type="Rhea" id="RHEA-COMP:9925"/>
        <dbReference type="Rhea" id="RHEA-COMP:9945"/>
        <dbReference type="ChEBI" id="CHEBI:15377"/>
        <dbReference type="ChEBI" id="CHEBI:78784"/>
        <dbReference type="ChEBI" id="CHEBI:78827"/>
        <dbReference type="EC" id="4.2.1.59"/>
    </reaction>
</comment>
<comment type="subcellular location">
    <subcellularLocation>
        <location evidence="1">Cytoplasm</location>
    </subcellularLocation>
</comment>
<comment type="similarity">
    <text evidence="1">Belongs to the thioester dehydratase family. FabZ subfamily.</text>
</comment>
<evidence type="ECO:0000255" key="1">
    <source>
        <dbReference type="HAMAP-Rule" id="MF_00406"/>
    </source>
</evidence>
<proteinExistence type="inferred from homology"/>
<accession>Q5GTN0</accession>
<gene>
    <name evidence="1" type="primary">fabZ</name>
    <name type="ordered locus">Wbm0052</name>
</gene>
<protein>
    <recommendedName>
        <fullName evidence="1">3-hydroxyacyl-[acyl-carrier-protein] dehydratase FabZ</fullName>
        <ecNumber evidence="1">4.2.1.59</ecNumber>
    </recommendedName>
    <alternativeName>
        <fullName evidence="1">(3R)-hydroxymyristoyl-[acyl-carrier-protein] dehydratase</fullName>
        <shortName evidence="1">(3R)-hydroxymyristoyl-ACP dehydrase</shortName>
    </alternativeName>
    <alternativeName>
        <fullName evidence="1">Beta-hydroxyacyl-ACP dehydratase</fullName>
    </alternativeName>
</protein>
<dbReference type="EC" id="4.2.1.59" evidence="1"/>
<dbReference type="EMBL" id="AE017321">
    <property type="protein sequence ID" value="AAW70644.1"/>
    <property type="molecule type" value="Genomic_DNA"/>
</dbReference>
<dbReference type="RefSeq" id="WP_011256254.1">
    <property type="nucleotide sequence ID" value="NC_006833.1"/>
</dbReference>
<dbReference type="SMR" id="Q5GTN0"/>
<dbReference type="STRING" id="292805.Wbm0052"/>
<dbReference type="KEGG" id="wbm:Wbm0052"/>
<dbReference type="eggNOG" id="COG0764">
    <property type="taxonomic scope" value="Bacteria"/>
</dbReference>
<dbReference type="HOGENOM" id="CLU_078912_1_2_5"/>
<dbReference type="Proteomes" id="UP000000534">
    <property type="component" value="Chromosome"/>
</dbReference>
<dbReference type="GO" id="GO:0005737">
    <property type="term" value="C:cytoplasm"/>
    <property type="evidence" value="ECO:0007669"/>
    <property type="project" value="UniProtKB-SubCell"/>
</dbReference>
<dbReference type="GO" id="GO:0016020">
    <property type="term" value="C:membrane"/>
    <property type="evidence" value="ECO:0007669"/>
    <property type="project" value="GOC"/>
</dbReference>
<dbReference type="GO" id="GO:0019171">
    <property type="term" value="F:(3R)-hydroxyacyl-[acyl-carrier-protein] dehydratase activity"/>
    <property type="evidence" value="ECO:0007669"/>
    <property type="project" value="UniProtKB-EC"/>
</dbReference>
<dbReference type="GO" id="GO:0006633">
    <property type="term" value="P:fatty acid biosynthetic process"/>
    <property type="evidence" value="ECO:0007669"/>
    <property type="project" value="UniProtKB-UniRule"/>
</dbReference>
<dbReference type="GO" id="GO:0009245">
    <property type="term" value="P:lipid A biosynthetic process"/>
    <property type="evidence" value="ECO:0007669"/>
    <property type="project" value="UniProtKB-UniRule"/>
</dbReference>
<dbReference type="CDD" id="cd01288">
    <property type="entry name" value="FabZ"/>
    <property type="match status" value="1"/>
</dbReference>
<dbReference type="FunFam" id="3.10.129.10:FF:000001">
    <property type="entry name" value="3-hydroxyacyl-[acyl-carrier-protein] dehydratase FabZ"/>
    <property type="match status" value="1"/>
</dbReference>
<dbReference type="Gene3D" id="3.10.129.10">
    <property type="entry name" value="Hotdog Thioesterase"/>
    <property type="match status" value="1"/>
</dbReference>
<dbReference type="HAMAP" id="MF_00406">
    <property type="entry name" value="FabZ"/>
    <property type="match status" value="1"/>
</dbReference>
<dbReference type="InterPro" id="IPR013114">
    <property type="entry name" value="FabA_FabZ"/>
</dbReference>
<dbReference type="InterPro" id="IPR010084">
    <property type="entry name" value="FabZ"/>
</dbReference>
<dbReference type="InterPro" id="IPR029069">
    <property type="entry name" value="HotDog_dom_sf"/>
</dbReference>
<dbReference type="NCBIfam" id="TIGR01750">
    <property type="entry name" value="fabZ"/>
    <property type="match status" value="1"/>
</dbReference>
<dbReference type="NCBIfam" id="NF000582">
    <property type="entry name" value="PRK00006.1"/>
    <property type="match status" value="1"/>
</dbReference>
<dbReference type="PANTHER" id="PTHR30272">
    <property type="entry name" value="3-HYDROXYACYL-[ACYL-CARRIER-PROTEIN] DEHYDRATASE"/>
    <property type="match status" value="1"/>
</dbReference>
<dbReference type="PANTHER" id="PTHR30272:SF1">
    <property type="entry name" value="3-HYDROXYACYL-[ACYL-CARRIER-PROTEIN] DEHYDRATASE"/>
    <property type="match status" value="1"/>
</dbReference>
<dbReference type="Pfam" id="PF07977">
    <property type="entry name" value="FabA"/>
    <property type="match status" value="1"/>
</dbReference>
<dbReference type="SUPFAM" id="SSF54637">
    <property type="entry name" value="Thioesterase/thiol ester dehydrase-isomerase"/>
    <property type="match status" value="1"/>
</dbReference>
<name>FABZ_WOLTR</name>
<reference key="1">
    <citation type="journal article" date="2005" name="PLoS Biol.">
        <title>The Wolbachia genome of Brugia malayi: endosymbiont evolution within a human pathogenic nematode.</title>
        <authorList>
            <person name="Foster J."/>
            <person name="Ganatra M."/>
            <person name="Kamal I."/>
            <person name="Ware J."/>
            <person name="Makarova K."/>
            <person name="Ivanova N."/>
            <person name="Bhattacharyya A."/>
            <person name="Kapatral V."/>
            <person name="Kumar S."/>
            <person name="Posfai J."/>
            <person name="Vincze T."/>
            <person name="Ingram J."/>
            <person name="Moran L."/>
            <person name="Lapidus A."/>
            <person name="Omelchenko M."/>
            <person name="Kyrpides N."/>
            <person name="Ghedin E."/>
            <person name="Wang S."/>
            <person name="Goltsman E."/>
            <person name="Joukov V."/>
            <person name="Ostrovskaya O."/>
            <person name="Tsukerman K."/>
            <person name="Mazur M."/>
            <person name="Comb D."/>
            <person name="Koonin E."/>
            <person name="Slatko B."/>
        </authorList>
    </citation>
    <scope>NUCLEOTIDE SEQUENCE [LARGE SCALE GENOMIC DNA]</scope>
    <source>
        <strain>TRS</strain>
    </source>
</reference>
<sequence>MQFNISDIIKILPHSYPFLLVDRVIECDPSKSIKAIKNVTFNEPFFIGHFPNHPIMPGVLIVESLAQASAICILGKGSKSTMENKVVYLMSIENAKFRKPVTPGDTLILQADFKNARLSVCKFECFAYVGEEKVAEATILAMLQNI</sequence>
<organism>
    <name type="scientific">Wolbachia sp. subsp. Brugia malayi (strain TRS)</name>
    <dbReference type="NCBI Taxonomy" id="292805"/>
    <lineage>
        <taxon>Bacteria</taxon>
        <taxon>Pseudomonadati</taxon>
        <taxon>Pseudomonadota</taxon>
        <taxon>Alphaproteobacteria</taxon>
        <taxon>Rickettsiales</taxon>
        <taxon>Anaplasmataceae</taxon>
        <taxon>Wolbachieae</taxon>
        <taxon>Wolbachia</taxon>
    </lineage>
</organism>